<gene>
    <name evidence="1" type="primary">aroA</name>
    <name type="ordered locus">BA_2953</name>
    <name type="ordered locus">GBAA_2953</name>
    <name type="ordered locus">BAS2744</name>
</gene>
<feature type="chain" id="PRO_0000088218" description="3-phosphoshikimate 1-carboxyvinyltransferase">
    <location>
        <begin position="1"/>
        <end position="429"/>
    </location>
</feature>
<feature type="active site" description="Proton acceptor" evidence="1">
    <location>
        <position position="316"/>
    </location>
</feature>
<feature type="binding site" evidence="1">
    <location>
        <position position="23"/>
    </location>
    <ligand>
        <name>3-phosphoshikimate</name>
        <dbReference type="ChEBI" id="CHEBI:145989"/>
    </ligand>
</feature>
<feature type="binding site" evidence="1">
    <location>
        <position position="23"/>
    </location>
    <ligand>
        <name>phosphoenolpyruvate</name>
        <dbReference type="ChEBI" id="CHEBI:58702"/>
    </ligand>
</feature>
<feature type="binding site" evidence="1">
    <location>
        <position position="24"/>
    </location>
    <ligand>
        <name>3-phosphoshikimate</name>
        <dbReference type="ChEBI" id="CHEBI:145989"/>
    </ligand>
</feature>
<feature type="binding site" evidence="1">
    <location>
        <position position="28"/>
    </location>
    <ligand>
        <name>3-phosphoshikimate</name>
        <dbReference type="ChEBI" id="CHEBI:145989"/>
    </ligand>
</feature>
<feature type="binding site" evidence="1">
    <location>
        <position position="95"/>
    </location>
    <ligand>
        <name>phosphoenolpyruvate</name>
        <dbReference type="ChEBI" id="CHEBI:58702"/>
    </ligand>
</feature>
<feature type="binding site" evidence="1">
    <location>
        <position position="123"/>
    </location>
    <ligand>
        <name>phosphoenolpyruvate</name>
        <dbReference type="ChEBI" id="CHEBI:58702"/>
    </ligand>
</feature>
<feature type="binding site" evidence="1">
    <location>
        <position position="168"/>
    </location>
    <ligand>
        <name>3-phosphoshikimate</name>
        <dbReference type="ChEBI" id="CHEBI:145989"/>
    </ligand>
</feature>
<feature type="binding site" evidence="1">
    <location>
        <position position="170"/>
    </location>
    <ligand>
        <name>3-phosphoshikimate</name>
        <dbReference type="ChEBI" id="CHEBI:145989"/>
    </ligand>
</feature>
<feature type="binding site" evidence="1">
    <location>
        <position position="170"/>
    </location>
    <ligand>
        <name>phosphoenolpyruvate</name>
        <dbReference type="ChEBI" id="CHEBI:58702"/>
    </ligand>
</feature>
<feature type="binding site" evidence="1">
    <location>
        <position position="316"/>
    </location>
    <ligand>
        <name>3-phosphoshikimate</name>
        <dbReference type="ChEBI" id="CHEBI:145989"/>
    </ligand>
</feature>
<feature type="binding site" evidence="1">
    <location>
        <position position="343"/>
    </location>
    <ligand>
        <name>3-phosphoshikimate</name>
        <dbReference type="ChEBI" id="CHEBI:145989"/>
    </ligand>
</feature>
<feature type="binding site" evidence="1">
    <location>
        <position position="347"/>
    </location>
    <ligand>
        <name>phosphoenolpyruvate</name>
        <dbReference type="ChEBI" id="CHEBI:58702"/>
    </ligand>
</feature>
<feature type="binding site" evidence="1">
    <location>
        <position position="389"/>
    </location>
    <ligand>
        <name>phosphoenolpyruvate</name>
        <dbReference type="ChEBI" id="CHEBI:58702"/>
    </ligand>
</feature>
<keyword id="KW-0028">Amino-acid biosynthesis</keyword>
<keyword id="KW-0057">Aromatic amino acid biosynthesis</keyword>
<keyword id="KW-0963">Cytoplasm</keyword>
<keyword id="KW-1185">Reference proteome</keyword>
<keyword id="KW-0808">Transferase</keyword>
<organism>
    <name type="scientific">Bacillus anthracis</name>
    <dbReference type="NCBI Taxonomy" id="1392"/>
    <lineage>
        <taxon>Bacteria</taxon>
        <taxon>Bacillati</taxon>
        <taxon>Bacillota</taxon>
        <taxon>Bacilli</taxon>
        <taxon>Bacillales</taxon>
        <taxon>Bacillaceae</taxon>
        <taxon>Bacillus</taxon>
        <taxon>Bacillus cereus group</taxon>
    </lineage>
</organism>
<dbReference type="EC" id="2.5.1.19" evidence="1"/>
<dbReference type="EMBL" id="AE016879">
    <property type="protein sequence ID" value="AAP26774.1"/>
    <property type="molecule type" value="Genomic_DNA"/>
</dbReference>
<dbReference type="EMBL" id="AE017334">
    <property type="protein sequence ID" value="AAT32071.2"/>
    <property type="molecule type" value="Genomic_DNA"/>
</dbReference>
<dbReference type="EMBL" id="AE017225">
    <property type="protein sequence ID" value="AAT55053.1"/>
    <property type="molecule type" value="Genomic_DNA"/>
</dbReference>
<dbReference type="RefSeq" id="NP_845288.1">
    <property type="nucleotide sequence ID" value="NC_003997.3"/>
</dbReference>
<dbReference type="RefSeq" id="WP_000664623.1">
    <property type="nucleotide sequence ID" value="NZ_WXXJ01000026.1"/>
</dbReference>
<dbReference type="RefSeq" id="YP_029002.1">
    <property type="nucleotide sequence ID" value="NC_005945.1"/>
</dbReference>
<dbReference type="SMR" id="Q81P64"/>
<dbReference type="STRING" id="261594.GBAA_2953"/>
<dbReference type="DNASU" id="1086557"/>
<dbReference type="GeneID" id="45022771"/>
<dbReference type="KEGG" id="ban:BA_2953"/>
<dbReference type="KEGG" id="bar:GBAA_2953"/>
<dbReference type="KEGG" id="bat:BAS2744"/>
<dbReference type="PATRIC" id="fig|198094.11.peg.2934"/>
<dbReference type="eggNOG" id="COG0128">
    <property type="taxonomic scope" value="Bacteria"/>
</dbReference>
<dbReference type="HOGENOM" id="CLU_024321_0_1_9"/>
<dbReference type="OMA" id="YEDHRMA"/>
<dbReference type="OrthoDB" id="9809920at2"/>
<dbReference type="UniPathway" id="UPA00053">
    <property type="reaction ID" value="UER00089"/>
</dbReference>
<dbReference type="Proteomes" id="UP000000427">
    <property type="component" value="Chromosome"/>
</dbReference>
<dbReference type="Proteomes" id="UP000000594">
    <property type="component" value="Chromosome"/>
</dbReference>
<dbReference type="GO" id="GO:0005737">
    <property type="term" value="C:cytoplasm"/>
    <property type="evidence" value="ECO:0007669"/>
    <property type="project" value="UniProtKB-SubCell"/>
</dbReference>
<dbReference type="GO" id="GO:0003866">
    <property type="term" value="F:3-phosphoshikimate 1-carboxyvinyltransferase activity"/>
    <property type="evidence" value="ECO:0007669"/>
    <property type="project" value="UniProtKB-UniRule"/>
</dbReference>
<dbReference type="GO" id="GO:0008652">
    <property type="term" value="P:amino acid biosynthetic process"/>
    <property type="evidence" value="ECO:0007669"/>
    <property type="project" value="UniProtKB-KW"/>
</dbReference>
<dbReference type="GO" id="GO:0009073">
    <property type="term" value="P:aromatic amino acid family biosynthetic process"/>
    <property type="evidence" value="ECO:0007669"/>
    <property type="project" value="UniProtKB-KW"/>
</dbReference>
<dbReference type="GO" id="GO:0009423">
    <property type="term" value="P:chorismate biosynthetic process"/>
    <property type="evidence" value="ECO:0007669"/>
    <property type="project" value="UniProtKB-UniRule"/>
</dbReference>
<dbReference type="CDD" id="cd01556">
    <property type="entry name" value="EPSP_synthase"/>
    <property type="match status" value="1"/>
</dbReference>
<dbReference type="FunFam" id="3.65.10.10:FF:000005">
    <property type="entry name" value="3-phosphoshikimate 1-carboxyvinyltransferase"/>
    <property type="match status" value="1"/>
</dbReference>
<dbReference type="FunFam" id="3.65.10.10:FF:000006">
    <property type="entry name" value="3-phosphoshikimate 1-carboxyvinyltransferase"/>
    <property type="match status" value="1"/>
</dbReference>
<dbReference type="Gene3D" id="3.65.10.10">
    <property type="entry name" value="Enolpyruvate transferase domain"/>
    <property type="match status" value="2"/>
</dbReference>
<dbReference type="HAMAP" id="MF_00210">
    <property type="entry name" value="EPSP_synth"/>
    <property type="match status" value="1"/>
</dbReference>
<dbReference type="InterPro" id="IPR001986">
    <property type="entry name" value="Enolpyruvate_Tfrase_dom"/>
</dbReference>
<dbReference type="InterPro" id="IPR036968">
    <property type="entry name" value="Enolpyruvate_Tfrase_sf"/>
</dbReference>
<dbReference type="InterPro" id="IPR006264">
    <property type="entry name" value="EPSP_synthase"/>
</dbReference>
<dbReference type="InterPro" id="IPR023193">
    <property type="entry name" value="EPSP_synthase_CS"/>
</dbReference>
<dbReference type="InterPro" id="IPR013792">
    <property type="entry name" value="RNA3'P_cycl/enolpyr_Trfase_a/b"/>
</dbReference>
<dbReference type="NCBIfam" id="TIGR01356">
    <property type="entry name" value="aroA"/>
    <property type="match status" value="1"/>
</dbReference>
<dbReference type="PANTHER" id="PTHR21090">
    <property type="entry name" value="AROM/DEHYDROQUINATE SYNTHASE"/>
    <property type="match status" value="1"/>
</dbReference>
<dbReference type="PANTHER" id="PTHR21090:SF5">
    <property type="entry name" value="PENTAFUNCTIONAL AROM POLYPEPTIDE"/>
    <property type="match status" value="1"/>
</dbReference>
<dbReference type="Pfam" id="PF00275">
    <property type="entry name" value="EPSP_synthase"/>
    <property type="match status" value="1"/>
</dbReference>
<dbReference type="PIRSF" id="PIRSF000505">
    <property type="entry name" value="EPSPS"/>
    <property type="match status" value="1"/>
</dbReference>
<dbReference type="SUPFAM" id="SSF55205">
    <property type="entry name" value="EPT/RTPC-like"/>
    <property type="match status" value="1"/>
</dbReference>
<dbReference type="PROSITE" id="PS00104">
    <property type="entry name" value="EPSP_SYNTHASE_1"/>
    <property type="match status" value="1"/>
</dbReference>
<dbReference type="PROSITE" id="PS00885">
    <property type="entry name" value="EPSP_SYNTHASE_2"/>
    <property type="match status" value="1"/>
</dbReference>
<accession>Q81P64</accession>
<accession>Q6HXD6</accession>
<accession>Q6KRF5</accession>
<sequence>MKERTIQPVNNGLNGNITIPGDKSISHRAVMFGAIAEGTTTIKGFLPGADCLSTISCFKEMGVDIVQNGDEVTVVGKGLEGLQEPKAVLDVGNSGTTIRLMSGILANTPFLSCVQGDTSIAKRPMKRVTNPLKQMGANIDGREEGTFTPLTIRGGDLKAIEYTSPVASAQVKSAILLAGLRAEGVTAVTEPHISRDHTERMLEAFGVKVTREGKTVKLAGGQKLTATDVQVPGDVSSAAFFLVAGAIIPNSKLVLENVGMNPTRTGIIDVLEKMGATFTVEPINEGASEPAANITIETSSLKGIEIGGDIIPRLIDEIPVIALAATQAEGITVIKDAHELKVKETNRIDTVVAELTKLGARIEATDDRMIIYGKSALKGNTVNSYGDHRIGMMLAIAGCIAEGKTIIEDAEAVGVSYPTFFEELQKLAK</sequence>
<protein>
    <recommendedName>
        <fullName evidence="1">3-phosphoshikimate 1-carboxyvinyltransferase</fullName>
        <ecNumber evidence="1">2.5.1.19</ecNumber>
    </recommendedName>
    <alternativeName>
        <fullName evidence="1">5-enolpyruvylshikimate-3-phosphate synthase</fullName>
        <shortName evidence="1">EPSP synthase</shortName>
        <shortName evidence="1">EPSPS</shortName>
    </alternativeName>
</protein>
<comment type="function">
    <text evidence="1">Catalyzes the transfer of the enolpyruvyl moiety of phosphoenolpyruvate (PEP) to the 5-hydroxyl of shikimate-3-phosphate (S3P) to produce enolpyruvyl shikimate-3-phosphate and inorganic phosphate.</text>
</comment>
<comment type="catalytic activity">
    <reaction evidence="1">
        <text>3-phosphoshikimate + phosphoenolpyruvate = 5-O-(1-carboxyvinyl)-3-phosphoshikimate + phosphate</text>
        <dbReference type="Rhea" id="RHEA:21256"/>
        <dbReference type="ChEBI" id="CHEBI:43474"/>
        <dbReference type="ChEBI" id="CHEBI:57701"/>
        <dbReference type="ChEBI" id="CHEBI:58702"/>
        <dbReference type="ChEBI" id="CHEBI:145989"/>
        <dbReference type="EC" id="2.5.1.19"/>
    </reaction>
    <physiologicalReaction direction="left-to-right" evidence="1">
        <dbReference type="Rhea" id="RHEA:21257"/>
    </physiologicalReaction>
</comment>
<comment type="pathway">
    <text evidence="1">Metabolic intermediate biosynthesis; chorismate biosynthesis; chorismate from D-erythrose 4-phosphate and phosphoenolpyruvate: step 6/7.</text>
</comment>
<comment type="subunit">
    <text evidence="1">Monomer.</text>
</comment>
<comment type="subcellular location">
    <subcellularLocation>
        <location evidence="1">Cytoplasm</location>
    </subcellularLocation>
</comment>
<comment type="similarity">
    <text evidence="1">Belongs to the EPSP synthase family.</text>
</comment>
<proteinExistence type="inferred from homology"/>
<reference key="1">
    <citation type="journal article" date="2003" name="Nature">
        <title>The genome sequence of Bacillus anthracis Ames and comparison to closely related bacteria.</title>
        <authorList>
            <person name="Read T.D."/>
            <person name="Peterson S.N."/>
            <person name="Tourasse N.J."/>
            <person name="Baillie L.W."/>
            <person name="Paulsen I.T."/>
            <person name="Nelson K.E."/>
            <person name="Tettelin H."/>
            <person name="Fouts D.E."/>
            <person name="Eisen J.A."/>
            <person name="Gill S.R."/>
            <person name="Holtzapple E.K."/>
            <person name="Okstad O.A."/>
            <person name="Helgason E."/>
            <person name="Rilstone J."/>
            <person name="Wu M."/>
            <person name="Kolonay J.F."/>
            <person name="Beanan M.J."/>
            <person name="Dodson R.J."/>
            <person name="Brinkac L.M."/>
            <person name="Gwinn M.L."/>
            <person name="DeBoy R.T."/>
            <person name="Madpu R."/>
            <person name="Daugherty S.C."/>
            <person name="Durkin A.S."/>
            <person name="Haft D.H."/>
            <person name="Nelson W.C."/>
            <person name="Peterson J.D."/>
            <person name="Pop M."/>
            <person name="Khouri H.M."/>
            <person name="Radune D."/>
            <person name="Benton J.L."/>
            <person name="Mahamoud Y."/>
            <person name="Jiang L."/>
            <person name="Hance I.R."/>
            <person name="Weidman J.F."/>
            <person name="Berry K.J."/>
            <person name="Plaut R.D."/>
            <person name="Wolf A.M."/>
            <person name="Watkins K.L."/>
            <person name="Nierman W.C."/>
            <person name="Hazen A."/>
            <person name="Cline R.T."/>
            <person name="Redmond C."/>
            <person name="Thwaite J.E."/>
            <person name="White O."/>
            <person name="Salzberg S.L."/>
            <person name="Thomason B."/>
            <person name="Friedlander A.M."/>
            <person name="Koehler T.M."/>
            <person name="Hanna P.C."/>
            <person name="Kolstoe A.-B."/>
            <person name="Fraser C.M."/>
        </authorList>
    </citation>
    <scope>NUCLEOTIDE SEQUENCE [LARGE SCALE GENOMIC DNA]</scope>
    <source>
        <strain>Ames / isolate Porton</strain>
    </source>
</reference>
<reference key="2">
    <citation type="journal article" date="2009" name="J. Bacteriol.">
        <title>The complete genome sequence of Bacillus anthracis Ames 'Ancestor'.</title>
        <authorList>
            <person name="Ravel J."/>
            <person name="Jiang L."/>
            <person name="Stanley S.T."/>
            <person name="Wilson M.R."/>
            <person name="Decker R.S."/>
            <person name="Read T.D."/>
            <person name="Worsham P."/>
            <person name="Keim P.S."/>
            <person name="Salzberg S.L."/>
            <person name="Fraser-Liggett C.M."/>
            <person name="Rasko D.A."/>
        </authorList>
    </citation>
    <scope>NUCLEOTIDE SEQUENCE [LARGE SCALE GENOMIC DNA]</scope>
    <source>
        <strain>Ames ancestor</strain>
    </source>
</reference>
<reference key="3">
    <citation type="submission" date="2004-01" db="EMBL/GenBank/DDBJ databases">
        <title>Complete genome sequence of Bacillus anthracis Sterne.</title>
        <authorList>
            <person name="Brettin T.S."/>
            <person name="Bruce D."/>
            <person name="Challacombe J.F."/>
            <person name="Gilna P."/>
            <person name="Han C."/>
            <person name="Hill K."/>
            <person name="Hitchcock P."/>
            <person name="Jackson P."/>
            <person name="Keim P."/>
            <person name="Longmire J."/>
            <person name="Lucas S."/>
            <person name="Okinaka R."/>
            <person name="Richardson P."/>
            <person name="Rubin E."/>
            <person name="Tice H."/>
        </authorList>
    </citation>
    <scope>NUCLEOTIDE SEQUENCE [LARGE SCALE GENOMIC DNA]</scope>
    <source>
        <strain>Sterne</strain>
    </source>
</reference>
<evidence type="ECO:0000255" key="1">
    <source>
        <dbReference type="HAMAP-Rule" id="MF_00210"/>
    </source>
</evidence>
<name>AROA_BACAN</name>